<reference key="1">
    <citation type="journal article" date="1996" name="Science">
        <title>Complete genome sequence of the methanogenic archaeon, Methanococcus jannaschii.</title>
        <authorList>
            <person name="Bult C.J."/>
            <person name="White O."/>
            <person name="Olsen G.J."/>
            <person name="Zhou L."/>
            <person name="Fleischmann R.D."/>
            <person name="Sutton G.G."/>
            <person name="Blake J.A."/>
            <person name="FitzGerald L.M."/>
            <person name="Clayton R.A."/>
            <person name="Gocayne J.D."/>
            <person name="Kerlavage A.R."/>
            <person name="Dougherty B.A."/>
            <person name="Tomb J.-F."/>
            <person name="Adams M.D."/>
            <person name="Reich C.I."/>
            <person name="Overbeek R."/>
            <person name="Kirkness E.F."/>
            <person name="Weinstock K.G."/>
            <person name="Merrick J.M."/>
            <person name="Glodek A."/>
            <person name="Scott J.L."/>
            <person name="Geoghagen N.S.M."/>
            <person name="Weidman J.F."/>
            <person name="Fuhrmann J.L."/>
            <person name="Nguyen D."/>
            <person name="Utterback T.R."/>
            <person name="Kelley J.M."/>
            <person name="Peterson J.D."/>
            <person name="Sadow P.W."/>
            <person name="Hanna M.C."/>
            <person name="Cotton M.D."/>
            <person name="Roberts K.M."/>
            <person name="Hurst M.A."/>
            <person name="Kaine B.P."/>
            <person name="Borodovsky M."/>
            <person name="Klenk H.-P."/>
            <person name="Fraser C.M."/>
            <person name="Smith H.O."/>
            <person name="Woese C.R."/>
            <person name="Venter J.C."/>
        </authorList>
    </citation>
    <scope>NUCLEOTIDE SEQUENCE [LARGE SCALE GENOMIC DNA]</scope>
    <source>
        <strain>ATCC 43067 / DSM 2661 / JAL-1 / JCM 10045 / NBRC 100440</strain>
    </source>
</reference>
<dbReference type="EMBL" id="L77117">
    <property type="protein sequence ID" value="AAB98542.1"/>
    <property type="molecule type" value="Genomic_DNA"/>
</dbReference>
<dbReference type="PIR" id="F64368">
    <property type="entry name" value="F64368"/>
</dbReference>
<dbReference type="RefSeq" id="WP_010870054.1">
    <property type="nucleotide sequence ID" value="NC_000909.1"/>
</dbReference>
<dbReference type="SMR" id="Q57970"/>
<dbReference type="STRING" id="243232.MJ_0550"/>
<dbReference type="PaxDb" id="243232-MJ_0550"/>
<dbReference type="EnsemblBacteria" id="AAB98542">
    <property type="protein sequence ID" value="AAB98542"/>
    <property type="gene ID" value="MJ_0550"/>
</dbReference>
<dbReference type="GeneID" id="1451415"/>
<dbReference type="KEGG" id="mja:MJ_0550"/>
<dbReference type="eggNOG" id="arCOG01360">
    <property type="taxonomic scope" value="Archaea"/>
</dbReference>
<dbReference type="HOGENOM" id="CLU_060488_0_0_2"/>
<dbReference type="InParanoid" id="Q57970"/>
<dbReference type="OrthoDB" id="105445at2157"/>
<dbReference type="PhylomeDB" id="Q57970"/>
<dbReference type="Proteomes" id="UP000000805">
    <property type="component" value="Chromosome"/>
</dbReference>
<dbReference type="GO" id="GO:0005737">
    <property type="term" value="C:cytoplasm"/>
    <property type="evidence" value="ECO:0000318"/>
    <property type="project" value="GO_Central"/>
</dbReference>
<dbReference type="GO" id="GO:0051539">
    <property type="term" value="F:4 iron, 4 sulfur cluster binding"/>
    <property type="evidence" value="ECO:0007669"/>
    <property type="project" value="UniProtKB-KW"/>
</dbReference>
<dbReference type="GO" id="GO:0003824">
    <property type="term" value="F:catalytic activity"/>
    <property type="evidence" value="ECO:0007669"/>
    <property type="project" value="InterPro"/>
</dbReference>
<dbReference type="GO" id="GO:0046872">
    <property type="term" value="F:metal ion binding"/>
    <property type="evidence" value="ECO:0007669"/>
    <property type="project" value="UniProtKB-KW"/>
</dbReference>
<dbReference type="GO" id="GO:0002926">
    <property type="term" value="P:tRNA wobble base 5-methoxycarbonylmethyl-2-thiouridinylation"/>
    <property type="evidence" value="ECO:0000318"/>
    <property type="project" value="GO_Central"/>
</dbReference>
<dbReference type="CDD" id="cd01335">
    <property type="entry name" value="Radical_SAM"/>
    <property type="match status" value="1"/>
</dbReference>
<dbReference type="InterPro" id="IPR039661">
    <property type="entry name" value="ELP3"/>
</dbReference>
<dbReference type="InterPro" id="IPR006638">
    <property type="entry name" value="Elp3/MiaA/NifB-like_rSAM"/>
</dbReference>
<dbReference type="InterPro" id="IPR005909">
    <property type="entry name" value="RaSEA"/>
</dbReference>
<dbReference type="InterPro" id="IPR007197">
    <property type="entry name" value="rSAM"/>
</dbReference>
<dbReference type="NCBIfam" id="TIGR01210">
    <property type="entry name" value="archaeosine biosynthesis radical SAM protein RaSEA"/>
    <property type="match status" value="1"/>
</dbReference>
<dbReference type="PANTHER" id="PTHR11135:SF0">
    <property type="entry name" value="ELONGATOR COMPLEX PROTEIN 3"/>
    <property type="match status" value="1"/>
</dbReference>
<dbReference type="PANTHER" id="PTHR11135">
    <property type="entry name" value="HISTONE ACETYLTRANSFERASE-RELATED"/>
    <property type="match status" value="1"/>
</dbReference>
<dbReference type="Pfam" id="PF04055">
    <property type="entry name" value="Radical_SAM"/>
    <property type="match status" value="1"/>
</dbReference>
<dbReference type="PIRSF" id="PIRSF004954">
    <property type="entry name" value="Radical_SAM"/>
    <property type="match status" value="1"/>
</dbReference>
<dbReference type="SFLD" id="SFLDS00029">
    <property type="entry name" value="Radical_SAM"/>
    <property type="match status" value="1"/>
</dbReference>
<dbReference type="SMART" id="SM00729">
    <property type="entry name" value="Elp3"/>
    <property type="match status" value="1"/>
</dbReference>
<dbReference type="SUPFAM" id="SSF102114">
    <property type="entry name" value="Radical SAM enzymes"/>
    <property type="match status" value="1"/>
</dbReference>
<dbReference type="PROSITE" id="PS51918">
    <property type="entry name" value="RADICAL_SAM"/>
    <property type="match status" value="1"/>
</dbReference>
<keyword id="KW-0004">4Fe-4S</keyword>
<keyword id="KW-0408">Iron</keyword>
<keyword id="KW-0411">Iron-sulfur</keyword>
<keyword id="KW-0479">Metal-binding</keyword>
<keyword id="KW-1185">Reference proteome</keyword>
<keyword id="KW-0949">S-adenosyl-L-methionine</keyword>
<accession>Q57970</accession>
<comment type="cofactor">
    <cofactor evidence="1">
        <name>[4Fe-4S] cluster</name>
        <dbReference type="ChEBI" id="CHEBI:49883"/>
    </cofactor>
</comment>
<sequence>MNQIINDNYREFLKKLRERHLKKRKVKDKNKPIAVWMQDDIYRDFSIGKSLTIILRTEGCYYAKEGGCLMCSYLMDSSPEKITAENIINQFNYAIEKYKEKIKDLKDFSVKIFTSGSFLDDREVPKEARNYIFKKLSEFDNLKEVAIESRPEFIDEDKLNEIRKYLDVNVEIGVGIESFNEEIREKAINKGITNEQIIRAIELAKNYNIGIKAYLLIKPLFITEKEAIYDSISSANKCIELGCSRISFCPATVHKGSVMEFFFNKNQYRPPFLWSIIEILKEVKKSNPKALIMCDTSGVGSERGAHNLYNCKCNKLIKERLERFTLTQDINVLNVECECKNIWNAYIEVENKNIVPLGDERKLLL</sequence>
<evidence type="ECO:0000255" key="1">
    <source>
        <dbReference type="PROSITE-ProRule" id="PRU01266"/>
    </source>
</evidence>
<gene>
    <name type="ordered locus">MJ0550</name>
</gene>
<organism>
    <name type="scientific">Methanocaldococcus jannaschii (strain ATCC 43067 / DSM 2661 / JAL-1 / JCM 10045 / NBRC 100440)</name>
    <name type="common">Methanococcus jannaschii</name>
    <dbReference type="NCBI Taxonomy" id="243232"/>
    <lineage>
        <taxon>Archaea</taxon>
        <taxon>Methanobacteriati</taxon>
        <taxon>Methanobacteriota</taxon>
        <taxon>Methanomada group</taxon>
        <taxon>Methanococci</taxon>
        <taxon>Methanococcales</taxon>
        <taxon>Methanocaldococcaceae</taxon>
        <taxon>Methanocaldococcus</taxon>
    </lineage>
</organism>
<proteinExistence type="predicted"/>
<protein>
    <recommendedName>
        <fullName>Uncharacterized protein MJ0550</fullName>
    </recommendedName>
</protein>
<name>Y550_METJA</name>
<feature type="chain" id="PRO_0000106927" description="Uncharacterized protein MJ0550">
    <location>
        <begin position="1"/>
        <end position="365"/>
    </location>
</feature>
<feature type="domain" description="Radical SAM core" evidence="1">
    <location>
        <begin position="45"/>
        <end position="289"/>
    </location>
</feature>
<feature type="binding site" evidence="1">
    <location>
        <position position="60"/>
    </location>
    <ligand>
        <name>[4Fe-4S] cluster</name>
        <dbReference type="ChEBI" id="CHEBI:49883"/>
        <note>4Fe-4S-S-AdoMet</note>
    </ligand>
</feature>
<feature type="binding site" evidence="1">
    <location>
        <position position="68"/>
    </location>
    <ligand>
        <name>[4Fe-4S] cluster</name>
        <dbReference type="ChEBI" id="CHEBI:49883"/>
        <note>4Fe-4S-S-AdoMet</note>
    </ligand>
</feature>
<feature type="binding site" evidence="1">
    <location>
        <position position="71"/>
    </location>
    <ligand>
        <name>[4Fe-4S] cluster</name>
        <dbReference type="ChEBI" id="CHEBI:49883"/>
        <note>4Fe-4S-S-AdoMet</note>
    </ligand>
</feature>